<evidence type="ECO:0000255" key="1">
    <source>
        <dbReference type="PROSITE-ProRule" id="PRU00029"/>
    </source>
</evidence>
<evidence type="ECO:0000255" key="2">
    <source>
        <dbReference type="PROSITE-ProRule" id="PRU00175"/>
    </source>
</evidence>
<reference key="1">
    <citation type="journal article" date="1993" name="J. Virol.">
        <title>An apoptosis-inhibiting baculovirus gene with a zinc finger-like motif.</title>
        <authorList>
            <person name="Crook N.E."/>
            <person name="Clem R.J."/>
            <person name="Miller L.K."/>
        </authorList>
    </citation>
    <scope>NUCLEOTIDE SEQUENCE [GENOMIC DNA]</scope>
    <source>
        <strain>Mexican 1</strain>
    </source>
</reference>
<reference key="2">
    <citation type="journal article" date="1997" name="Virus Genes">
        <title>Complete sequence and transposon mutagenesis of the BamHI J fragment of Cydia pomonella granulosis virus.</title>
        <authorList>
            <person name="Kang W."/>
            <person name="Crook N.E."/>
            <person name="Winstanley D."/>
            <person name="O'Reilly D.R."/>
        </authorList>
    </citation>
    <scope>NUCLEOTIDE SEQUENCE [GENOMIC DNA]</scope>
    <source>
        <strain>Mexican 1</strain>
    </source>
</reference>
<reference key="3">
    <citation type="journal article" date="2001" name="J. Gen. Virol.">
        <title>The complete sequence of the Cydia pomonella granulovirus genome.</title>
        <authorList>
            <person name="Luque T."/>
            <person name="Finch R."/>
            <person name="Crook N."/>
            <person name="O'Reilly D.R."/>
            <person name="Winstanley D."/>
        </authorList>
    </citation>
    <scope>NUCLEOTIDE SEQUENCE [GENOMIC DNA]</scope>
    <source>
        <strain>Mexican 1</strain>
    </source>
</reference>
<keyword id="KW-0053">Apoptosis</keyword>
<keyword id="KW-0479">Metal-binding</keyword>
<keyword id="KW-1185">Reference proteome</keyword>
<keyword id="KW-0677">Repeat</keyword>
<keyword id="KW-0862">Zinc</keyword>
<keyword id="KW-0863">Zinc-finger</keyword>
<gene>
    <name type="primary">IAP</name>
</gene>
<protein>
    <recommendedName>
        <fullName>Apoptosis inhibitor IAP</fullName>
    </recommendedName>
</protein>
<proteinExistence type="predicted"/>
<dbReference type="EMBL" id="U53466">
    <property type="protein sequence ID" value="AAB39098.1"/>
    <property type="molecule type" value="Genomic_DNA"/>
</dbReference>
<dbReference type="PIR" id="A45679">
    <property type="entry name" value="A45679"/>
</dbReference>
<dbReference type="SMR" id="P41436"/>
<dbReference type="MEROPS" id="I32.010"/>
<dbReference type="KEGG" id="vg:921387"/>
<dbReference type="Proteomes" id="UP000009249">
    <property type="component" value="Segment"/>
</dbReference>
<dbReference type="GO" id="GO:0043027">
    <property type="term" value="F:cysteine-type endopeptidase inhibitor activity involved in apoptotic process"/>
    <property type="evidence" value="ECO:0007669"/>
    <property type="project" value="TreeGrafter"/>
</dbReference>
<dbReference type="GO" id="GO:0061630">
    <property type="term" value="F:ubiquitin protein ligase activity"/>
    <property type="evidence" value="ECO:0007669"/>
    <property type="project" value="TreeGrafter"/>
</dbReference>
<dbReference type="GO" id="GO:0008270">
    <property type="term" value="F:zinc ion binding"/>
    <property type="evidence" value="ECO:0007669"/>
    <property type="project" value="UniProtKB-KW"/>
</dbReference>
<dbReference type="GO" id="GO:0043066">
    <property type="term" value="P:negative regulation of apoptotic process"/>
    <property type="evidence" value="ECO:0007669"/>
    <property type="project" value="TreeGrafter"/>
</dbReference>
<dbReference type="GO" id="GO:0090263">
    <property type="term" value="P:positive regulation of canonical Wnt signaling pathway"/>
    <property type="evidence" value="ECO:0007669"/>
    <property type="project" value="TreeGrafter"/>
</dbReference>
<dbReference type="GO" id="GO:0031398">
    <property type="term" value="P:positive regulation of protein ubiquitination"/>
    <property type="evidence" value="ECO:0007669"/>
    <property type="project" value="TreeGrafter"/>
</dbReference>
<dbReference type="GO" id="GO:0051726">
    <property type="term" value="P:regulation of cell cycle"/>
    <property type="evidence" value="ECO:0007669"/>
    <property type="project" value="TreeGrafter"/>
</dbReference>
<dbReference type="CDD" id="cd00022">
    <property type="entry name" value="BIR"/>
    <property type="match status" value="2"/>
</dbReference>
<dbReference type="CDD" id="cd16510">
    <property type="entry name" value="RING-HC_IAPs"/>
    <property type="match status" value="1"/>
</dbReference>
<dbReference type="FunFam" id="1.10.1170.10:FF:000002">
    <property type="entry name" value="Baculoviral IAP repeat containing 7"/>
    <property type="match status" value="1"/>
</dbReference>
<dbReference type="FunFam" id="1.10.1170.10:FF:000003">
    <property type="entry name" value="E3 ubiquitin-protein ligase XIAP"/>
    <property type="match status" value="1"/>
</dbReference>
<dbReference type="Gene3D" id="1.10.1170.10">
    <property type="entry name" value="Inhibitor Of Apoptosis Protein (2mihbC-IAP-1), Chain A"/>
    <property type="match status" value="2"/>
</dbReference>
<dbReference type="Gene3D" id="3.30.40.10">
    <property type="entry name" value="Zinc/RING finger domain, C3HC4 (zinc finger)"/>
    <property type="match status" value="1"/>
</dbReference>
<dbReference type="InterPro" id="IPR001370">
    <property type="entry name" value="BIR_rpt"/>
</dbReference>
<dbReference type="InterPro" id="IPR050784">
    <property type="entry name" value="IAP"/>
</dbReference>
<dbReference type="InterPro" id="IPR001841">
    <property type="entry name" value="Znf_RING"/>
</dbReference>
<dbReference type="InterPro" id="IPR013083">
    <property type="entry name" value="Znf_RING/FYVE/PHD"/>
</dbReference>
<dbReference type="PANTHER" id="PTHR10044:SF174">
    <property type="entry name" value="DEATH-ASSOCIATED INHIBITOR OF APOPTOSIS 1"/>
    <property type="match status" value="1"/>
</dbReference>
<dbReference type="PANTHER" id="PTHR10044">
    <property type="entry name" value="INHIBITOR OF APOPTOSIS"/>
    <property type="match status" value="1"/>
</dbReference>
<dbReference type="Pfam" id="PF00653">
    <property type="entry name" value="BIR"/>
    <property type="match status" value="2"/>
</dbReference>
<dbReference type="Pfam" id="PF13920">
    <property type="entry name" value="zf-C3HC4_3"/>
    <property type="match status" value="1"/>
</dbReference>
<dbReference type="SMART" id="SM00238">
    <property type="entry name" value="BIR"/>
    <property type="match status" value="2"/>
</dbReference>
<dbReference type="SUPFAM" id="SSF57924">
    <property type="entry name" value="Inhibitor of apoptosis (IAP) repeat"/>
    <property type="match status" value="2"/>
</dbReference>
<dbReference type="PROSITE" id="PS01282">
    <property type="entry name" value="BIR_REPEAT_1"/>
    <property type="match status" value="2"/>
</dbReference>
<dbReference type="PROSITE" id="PS50143">
    <property type="entry name" value="BIR_REPEAT_2"/>
    <property type="match status" value="2"/>
</dbReference>
<dbReference type="PROSITE" id="PS50089">
    <property type="entry name" value="ZF_RING_2"/>
    <property type="match status" value="1"/>
</dbReference>
<organismHost>
    <name type="scientific">Cydia pomonella</name>
    <name type="common">Codling moth</name>
    <dbReference type="NCBI Taxonomy" id="82600"/>
</organismHost>
<name>IAP_GVCPM</name>
<accession>P41436</accession>
<feature type="chain" id="PRO_0000122372" description="Apoptosis inhibitor IAP">
    <location>
        <begin position="1"/>
        <end position="275"/>
    </location>
</feature>
<feature type="repeat" description="BIR 1">
    <location>
        <begin position="7"/>
        <end position="73"/>
    </location>
</feature>
<feature type="repeat" description="BIR 2">
    <location>
        <begin position="108"/>
        <end position="175"/>
    </location>
</feature>
<feature type="zinc finger region" description="RING-type" evidence="2">
    <location>
        <begin position="228"/>
        <end position="263"/>
    </location>
</feature>
<feature type="binding site" evidence="1">
    <location>
        <position position="145"/>
    </location>
    <ligand>
        <name>Zn(2+)</name>
        <dbReference type="ChEBI" id="CHEBI:29105"/>
    </ligand>
</feature>
<feature type="binding site" evidence="1">
    <location>
        <position position="148"/>
    </location>
    <ligand>
        <name>Zn(2+)</name>
        <dbReference type="ChEBI" id="CHEBI:29105"/>
    </ligand>
</feature>
<feature type="binding site" evidence="1">
    <location>
        <position position="165"/>
    </location>
    <ligand>
        <name>Zn(2+)</name>
        <dbReference type="ChEBI" id="CHEBI:29105"/>
    </ligand>
</feature>
<feature type="binding site" evidence="1">
    <location>
        <position position="172"/>
    </location>
    <ligand>
        <name>Zn(2+)</name>
        <dbReference type="ChEBI" id="CHEBI:29105"/>
    </ligand>
</feature>
<organism>
    <name type="scientific">Cydia pomonella granulosis virus (isolate Mexico/1963)</name>
    <name type="common">CpGV</name>
    <name type="synonym">Cydia pomonella granulovirus</name>
    <dbReference type="NCBI Taxonomy" id="654905"/>
    <lineage>
        <taxon>Viruses</taxon>
        <taxon>Viruses incertae sedis</taxon>
        <taxon>Naldaviricetes</taxon>
        <taxon>Lefavirales</taxon>
        <taxon>Baculoviridae</taxon>
        <taxon>Betabaculovirus</taxon>
        <taxon>Betabaculovirus cypomonellae</taxon>
    </lineage>
</organism>
<sequence>MSDLRLEEVRLNTFEKWPVSFLSPETMAKNGFYYLGRSDEVRCAFCKVEIMRWKEGEDPAADHKKWAPQCPFVKGIDVCGSIVTTNNIQNTTTHDTIIGPAHPKYAHEAARVKSFHNWPRCMKQRPEQMADAGFFYTGYGDNTKCFYCDGGLKDWEPEDVPWEQHVRWFDRCAYVQLVKGRDYVQKVITEACVLPGENTTVSTAAPVSEPIPETKIEKEPQVEDSKLCKICYVEECIVCFVPCGHVVACAKCALSVDKCPMCRKIVTSVLKVYFS</sequence>
<comment type="function">
    <text>Acts by blocking cellular apoptosis rather than by preventing viral stimulation of apoptosis.</text>
</comment>